<comment type="function">
    <text evidence="1">Amino acid transporter.</text>
</comment>
<comment type="subcellular location">
    <subcellularLocation>
        <location evidence="4">Cell membrane</location>
        <topology evidence="4">Multi-pass membrane protein</topology>
    </subcellularLocation>
</comment>
<comment type="similarity">
    <text evidence="4">Belongs to the amino acid/polyamine transporter 2 family. Amino acid/auxin permease (AAAP) (TC 2.A.18.2) subfamily.</text>
</comment>
<comment type="sequence caution" evidence="4">
    <conflict type="erroneous initiation">
        <sequence resource="EMBL-CDS" id="AAM65081"/>
    </conflict>
    <text>Truncated N-terminus.</text>
</comment>
<comment type="sequence caution" evidence="4">
    <conflict type="erroneous initiation">
        <sequence resource="EMBL-CDS" id="AAO41951"/>
    </conflict>
    <text>Truncated N-terminus.</text>
</comment>
<comment type="sequence caution" evidence="4">
    <conflict type="erroneous gene model prediction">
        <sequence resource="EMBL-CDS" id="CAB36725"/>
    </conflict>
</comment>
<comment type="sequence caution" evidence="4">
    <conflict type="erroneous gene model prediction">
        <sequence resource="EMBL-CDS" id="CAB80235"/>
    </conflict>
</comment>
<organism>
    <name type="scientific">Arabidopsis thaliana</name>
    <name type="common">Mouse-ear cress</name>
    <dbReference type="NCBI Taxonomy" id="3702"/>
    <lineage>
        <taxon>Eukaryota</taxon>
        <taxon>Viridiplantae</taxon>
        <taxon>Streptophyta</taxon>
        <taxon>Embryophyta</taxon>
        <taxon>Tracheophyta</taxon>
        <taxon>Spermatophyta</taxon>
        <taxon>Magnoliopsida</taxon>
        <taxon>eudicotyledons</taxon>
        <taxon>Gunneridae</taxon>
        <taxon>Pentapetalae</taxon>
        <taxon>rosids</taxon>
        <taxon>malvids</taxon>
        <taxon>Brassicales</taxon>
        <taxon>Brassicaceae</taxon>
        <taxon>Camelineae</taxon>
        <taxon>Arabidopsis</taxon>
    </lineage>
</organism>
<gene>
    <name type="ordered locus">At4g35180</name>
    <name type="ORF">T12J5.50</name>
</gene>
<dbReference type="EMBL" id="AL035522">
    <property type="protein sequence ID" value="CAB36725.1"/>
    <property type="status" value="ALT_SEQ"/>
    <property type="molecule type" value="Genomic_DNA"/>
</dbReference>
<dbReference type="EMBL" id="AL161586">
    <property type="protein sequence ID" value="CAB80235.1"/>
    <property type="status" value="ALT_SEQ"/>
    <property type="molecule type" value="Genomic_DNA"/>
</dbReference>
<dbReference type="EMBL" id="CP002687">
    <property type="protein sequence ID" value="AEE86477.1"/>
    <property type="molecule type" value="Genomic_DNA"/>
</dbReference>
<dbReference type="EMBL" id="AY087539">
    <property type="protein sequence ID" value="AAM65081.1"/>
    <property type="status" value="ALT_INIT"/>
    <property type="molecule type" value="mRNA"/>
</dbReference>
<dbReference type="EMBL" id="BT003903">
    <property type="protein sequence ID" value="AAO41951.1"/>
    <property type="status" value="ALT_INIT"/>
    <property type="molecule type" value="mRNA"/>
</dbReference>
<dbReference type="EMBL" id="BT026137">
    <property type="protein sequence ID" value="ABG48493.1"/>
    <property type="molecule type" value="mRNA"/>
</dbReference>
<dbReference type="PIR" id="T04965">
    <property type="entry name" value="T04965"/>
</dbReference>
<dbReference type="RefSeq" id="NP_567977.2">
    <property type="nucleotide sequence ID" value="NM_119684.4"/>
</dbReference>
<dbReference type="FunCoup" id="Q84WE9">
    <property type="interactions" value="1"/>
</dbReference>
<dbReference type="STRING" id="3702.Q84WE9"/>
<dbReference type="TCDB" id="2.A.18.2.6">
    <property type="family name" value="the amino acid/auxin permease (aaap) family"/>
</dbReference>
<dbReference type="PaxDb" id="3702-AT4G35180.1"/>
<dbReference type="EnsemblPlants" id="AT4G35180.1">
    <property type="protein sequence ID" value="AT4G35180.1"/>
    <property type="gene ID" value="AT4G35180"/>
</dbReference>
<dbReference type="GeneID" id="829671"/>
<dbReference type="Gramene" id="AT4G35180.1">
    <property type="protein sequence ID" value="AT4G35180.1"/>
    <property type="gene ID" value="AT4G35180"/>
</dbReference>
<dbReference type="KEGG" id="ath:AT4G35180"/>
<dbReference type="Araport" id="AT4G35180"/>
<dbReference type="TAIR" id="AT4G35180">
    <property type="gene designation" value="LHT7"/>
</dbReference>
<dbReference type="eggNOG" id="KOG1303">
    <property type="taxonomic scope" value="Eukaryota"/>
</dbReference>
<dbReference type="HOGENOM" id="CLU_031160_2_1_1"/>
<dbReference type="InParanoid" id="Q84WE9"/>
<dbReference type="OMA" id="RMMLRVF"/>
<dbReference type="PRO" id="PR:Q84WE9"/>
<dbReference type="Proteomes" id="UP000006548">
    <property type="component" value="Chromosome 4"/>
</dbReference>
<dbReference type="ExpressionAtlas" id="Q84WE9">
    <property type="expression patterns" value="baseline and differential"/>
</dbReference>
<dbReference type="GO" id="GO:0005886">
    <property type="term" value="C:plasma membrane"/>
    <property type="evidence" value="ECO:0007669"/>
    <property type="project" value="UniProtKB-SubCell"/>
</dbReference>
<dbReference type="GO" id="GO:0006865">
    <property type="term" value="P:amino acid transport"/>
    <property type="evidence" value="ECO:0007669"/>
    <property type="project" value="UniProtKB-KW"/>
</dbReference>
<dbReference type="InterPro" id="IPR013057">
    <property type="entry name" value="AA_transpt_TM"/>
</dbReference>
<dbReference type="PANTHER" id="PTHR48017">
    <property type="entry name" value="OS05G0424000 PROTEIN-RELATED"/>
    <property type="match status" value="1"/>
</dbReference>
<dbReference type="Pfam" id="PF01490">
    <property type="entry name" value="Aa_trans"/>
    <property type="match status" value="1"/>
</dbReference>
<keyword id="KW-0029">Amino-acid transport</keyword>
<keyword id="KW-1003">Cell membrane</keyword>
<keyword id="KW-0472">Membrane</keyword>
<keyword id="KW-1185">Reference proteome</keyword>
<keyword id="KW-0812">Transmembrane</keyword>
<keyword id="KW-1133">Transmembrane helix</keyword>
<keyword id="KW-0813">Transport</keyword>
<sequence length="478" mass="52294">MSIALGNLFDLESQESGGSPLFMSPAPSTDPQPISGEKNGGDGGRIPVEEWLPITESRKGNVYTATFHLLCSGIGLQVILLPAAFAALGWVWGTIILTVGFVWKLYTTWLLVQLHEAVPGIRISRYVRLAIASFGVKLGKLLGIFPVMYLSGGACTILVITGGKSIQQLLQIMSDDNTAPLTSVQCFLVFSCIAMIMSQFPNLNSLFGVSLIGAFMGIAYCTVIWILPVASDSQRTQVSVSYATMDKSFVHIFNAIGLIALVYRGNNLVLEIQGTLPSDSKNPSCKTMWRAVMISHALVAICMFPLTFAVYWAYGDKIPATGGPVGNYLKLYTQEHSKRAACFIHLTFIFSCLCSYPINLMPACDNIEMVYITKKKKPASIIVRMMLRVFLSLVCFTIAVGFPFLPYLAVLIGAIALLVTFTYPCFMWISIKKPQRKSPMWLFNVLVGCLGASLSVLLLVASAMRLAQKGLHANFFRP</sequence>
<feature type="chain" id="PRO_0000387977" description="Lysine histidine transporter-like 7">
    <location>
        <begin position="1"/>
        <end position="478"/>
    </location>
</feature>
<feature type="topological domain" description="Cytoplasmic" evidence="2">
    <location>
        <begin position="1"/>
        <end position="63"/>
    </location>
</feature>
<feature type="transmembrane region" description="Helical" evidence="2">
    <location>
        <begin position="64"/>
        <end position="86"/>
    </location>
</feature>
<feature type="topological domain" description="Extracellular" evidence="2">
    <location>
        <begin position="87"/>
        <end position="89"/>
    </location>
</feature>
<feature type="transmembrane region" description="Helical" evidence="2">
    <location>
        <begin position="90"/>
        <end position="112"/>
    </location>
</feature>
<feature type="topological domain" description="Cytoplasmic" evidence="2">
    <location>
        <begin position="113"/>
        <end position="140"/>
    </location>
</feature>
<feature type="transmembrane region" description="Helical" evidence="2">
    <location>
        <begin position="141"/>
        <end position="161"/>
    </location>
</feature>
<feature type="topological domain" description="Extracellular" evidence="2">
    <location>
        <begin position="162"/>
        <end position="177"/>
    </location>
</feature>
<feature type="transmembrane region" description="Helical" evidence="2">
    <location>
        <begin position="178"/>
        <end position="198"/>
    </location>
</feature>
<feature type="topological domain" description="Cytoplasmic" evidence="2">
    <location>
        <begin position="199"/>
        <end position="205"/>
    </location>
</feature>
<feature type="transmembrane region" description="Helical" evidence="2">
    <location>
        <begin position="206"/>
        <end position="226"/>
    </location>
</feature>
<feature type="topological domain" description="Extracellular" evidence="2">
    <location>
        <begin position="227"/>
        <end position="241"/>
    </location>
</feature>
<feature type="transmembrane region" description="Helical" evidence="2">
    <location>
        <begin position="242"/>
        <end position="262"/>
    </location>
</feature>
<feature type="topological domain" description="Cytoplasmic" evidence="2">
    <location>
        <begin position="263"/>
        <end position="291"/>
    </location>
</feature>
<feature type="transmembrane region" description="Helical" evidence="2">
    <location>
        <begin position="292"/>
        <end position="312"/>
    </location>
</feature>
<feature type="topological domain" description="Extracellular" evidence="2">
    <location>
        <begin position="313"/>
        <end position="340"/>
    </location>
</feature>
<feature type="transmembrane region" description="Helical" evidence="2">
    <location>
        <begin position="341"/>
        <end position="361"/>
    </location>
</feature>
<feature type="topological domain" description="Cytoplasmic" evidence="2">
    <location>
        <begin position="362"/>
        <end position="379"/>
    </location>
</feature>
<feature type="transmembrane region" description="Helical" evidence="2">
    <location>
        <begin position="380"/>
        <end position="402"/>
    </location>
</feature>
<feature type="topological domain" description="Extracellular" evidence="2">
    <location>
        <begin position="403"/>
        <end position="406"/>
    </location>
</feature>
<feature type="transmembrane region" description="Helical" evidence="2">
    <location>
        <begin position="407"/>
        <end position="429"/>
    </location>
</feature>
<feature type="topological domain" description="Cytoplasmic" evidence="2">
    <location>
        <begin position="430"/>
        <end position="439"/>
    </location>
</feature>
<feature type="transmembrane region" description="Helical" evidence="2">
    <location>
        <begin position="440"/>
        <end position="460"/>
    </location>
</feature>
<feature type="topological domain" description="Extracellular" evidence="2">
    <location>
        <begin position="461"/>
        <end position="478"/>
    </location>
</feature>
<feature type="region of interest" description="Disordered" evidence="3">
    <location>
        <begin position="15"/>
        <end position="45"/>
    </location>
</feature>
<feature type="sequence conflict" description="In Ref. 3; AAM65081." evidence="4" ref="3">
    <original>E</original>
    <variation>K</variation>
    <location>
        <position position="37"/>
    </location>
</feature>
<feature type="sequence conflict" description="In Ref. 3; AAM65081." evidence="4" ref="3">
    <original>A</original>
    <variation>V</variation>
    <location>
        <position position="309"/>
    </location>
</feature>
<accession>Q84WE9</accession>
<accession>Q8LAX8</accession>
<accession>Q9T005</accession>
<protein>
    <recommendedName>
        <fullName>Lysine histidine transporter-like 7</fullName>
    </recommendedName>
</protein>
<evidence type="ECO:0000250" key="1"/>
<evidence type="ECO:0000255" key="2"/>
<evidence type="ECO:0000256" key="3">
    <source>
        <dbReference type="SAM" id="MobiDB-lite"/>
    </source>
</evidence>
<evidence type="ECO:0000305" key="4"/>
<reference key="1">
    <citation type="journal article" date="1999" name="Nature">
        <title>Sequence and analysis of chromosome 4 of the plant Arabidopsis thaliana.</title>
        <authorList>
            <person name="Mayer K.F.X."/>
            <person name="Schueller C."/>
            <person name="Wambutt R."/>
            <person name="Murphy G."/>
            <person name="Volckaert G."/>
            <person name="Pohl T."/>
            <person name="Duesterhoeft A."/>
            <person name="Stiekema W."/>
            <person name="Entian K.-D."/>
            <person name="Terryn N."/>
            <person name="Harris B."/>
            <person name="Ansorge W."/>
            <person name="Brandt P."/>
            <person name="Grivell L.A."/>
            <person name="Rieger M."/>
            <person name="Weichselgartner M."/>
            <person name="de Simone V."/>
            <person name="Obermaier B."/>
            <person name="Mache R."/>
            <person name="Mueller M."/>
            <person name="Kreis M."/>
            <person name="Delseny M."/>
            <person name="Puigdomenech P."/>
            <person name="Watson M."/>
            <person name="Schmidtheini T."/>
            <person name="Reichert B."/>
            <person name="Portetelle D."/>
            <person name="Perez-Alonso M."/>
            <person name="Boutry M."/>
            <person name="Bancroft I."/>
            <person name="Vos P."/>
            <person name="Hoheisel J."/>
            <person name="Zimmermann W."/>
            <person name="Wedler H."/>
            <person name="Ridley P."/>
            <person name="Langham S.-A."/>
            <person name="McCullagh B."/>
            <person name="Bilham L."/>
            <person name="Robben J."/>
            <person name="van der Schueren J."/>
            <person name="Grymonprez B."/>
            <person name="Chuang Y.-J."/>
            <person name="Vandenbussche F."/>
            <person name="Braeken M."/>
            <person name="Weltjens I."/>
            <person name="Voet M."/>
            <person name="Bastiaens I."/>
            <person name="Aert R."/>
            <person name="Defoor E."/>
            <person name="Weitzenegger T."/>
            <person name="Bothe G."/>
            <person name="Ramsperger U."/>
            <person name="Hilbert H."/>
            <person name="Braun M."/>
            <person name="Holzer E."/>
            <person name="Brandt A."/>
            <person name="Peters S."/>
            <person name="van Staveren M."/>
            <person name="Dirkse W."/>
            <person name="Mooijman P."/>
            <person name="Klein Lankhorst R."/>
            <person name="Rose M."/>
            <person name="Hauf J."/>
            <person name="Koetter P."/>
            <person name="Berneiser S."/>
            <person name="Hempel S."/>
            <person name="Feldpausch M."/>
            <person name="Lamberth S."/>
            <person name="Van den Daele H."/>
            <person name="De Keyser A."/>
            <person name="Buysshaert C."/>
            <person name="Gielen J."/>
            <person name="Villarroel R."/>
            <person name="De Clercq R."/>
            <person name="van Montagu M."/>
            <person name="Rogers J."/>
            <person name="Cronin A."/>
            <person name="Quail M.A."/>
            <person name="Bray-Allen S."/>
            <person name="Clark L."/>
            <person name="Doggett J."/>
            <person name="Hall S."/>
            <person name="Kay M."/>
            <person name="Lennard N."/>
            <person name="McLay K."/>
            <person name="Mayes R."/>
            <person name="Pettett A."/>
            <person name="Rajandream M.A."/>
            <person name="Lyne M."/>
            <person name="Benes V."/>
            <person name="Rechmann S."/>
            <person name="Borkova D."/>
            <person name="Bloecker H."/>
            <person name="Scharfe M."/>
            <person name="Grimm M."/>
            <person name="Loehnert T.-H."/>
            <person name="Dose S."/>
            <person name="de Haan M."/>
            <person name="Maarse A.C."/>
            <person name="Schaefer M."/>
            <person name="Mueller-Auer S."/>
            <person name="Gabel C."/>
            <person name="Fuchs M."/>
            <person name="Fartmann B."/>
            <person name="Granderath K."/>
            <person name="Dauner D."/>
            <person name="Herzl A."/>
            <person name="Neumann S."/>
            <person name="Argiriou A."/>
            <person name="Vitale D."/>
            <person name="Liguori R."/>
            <person name="Piravandi E."/>
            <person name="Massenet O."/>
            <person name="Quigley F."/>
            <person name="Clabauld G."/>
            <person name="Muendlein A."/>
            <person name="Felber R."/>
            <person name="Schnabl S."/>
            <person name="Hiller R."/>
            <person name="Schmidt W."/>
            <person name="Lecharny A."/>
            <person name="Aubourg S."/>
            <person name="Chefdor F."/>
            <person name="Cooke R."/>
            <person name="Berger C."/>
            <person name="Monfort A."/>
            <person name="Casacuberta E."/>
            <person name="Gibbons T."/>
            <person name="Weber N."/>
            <person name="Vandenbol M."/>
            <person name="Bargues M."/>
            <person name="Terol J."/>
            <person name="Torres A."/>
            <person name="Perez-Perez A."/>
            <person name="Purnelle B."/>
            <person name="Bent E."/>
            <person name="Johnson S."/>
            <person name="Tacon D."/>
            <person name="Jesse T."/>
            <person name="Heijnen L."/>
            <person name="Schwarz S."/>
            <person name="Scholler P."/>
            <person name="Heber S."/>
            <person name="Francs P."/>
            <person name="Bielke C."/>
            <person name="Frishman D."/>
            <person name="Haase D."/>
            <person name="Lemcke K."/>
            <person name="Mewes H.-W."/>
            <person name="Stocker S."/>
            <person name="Zaccaria P."/>
            <person name="Bevan M."/>
            <person name="Wilson R.K."/>
            <person name="de la Bastide M."/>
            <person name="Habermann K."/>
            <person name="Parnell L."/>
            <person name="Dedhia N."/>
            <person name="Gnoj L."/>
            <person name="Schutz K."/>
            <person name="Huang E."/>
            <person name="Spiegel L."/>
            <person name="Sekhon M."/>
            <person name="Murray J."/>
            <person name="Sheet P."/>
            <person name="Cordes M."/>
            <person name="Abu-Threideh J."/>
            <person name="Stoneking T."/>
            <person name="Kalicki J."/>
            <person name="Graves T."/>
            <person name="Harmon G."/>
            <person name="Edwards J."/>
            <person name="Latreille P."/>
            <person name="Courtney L."/>
            <person name="Cloud J."/>
            <person name="Abbott A."/>
            <person name="Scott K."/>
            <person name="Johnson D."/>
            <person name="Minx P."/>
            <person name="Bentley D."/>
            <person name="Fulton B."/>
            <person name="Miller N."/>
            <person name="Greco T."/>
            <person name="Kemp K."/>
            <person name="Kramer J."/>
            <person name="Fulton L."/>
            <person name="Mardis E."/>
            <person name="Dante M."/>
            <person name="Pepin K."/>
            <person name="Hillier L.W."/>
            <person name="Nelson J."/>
            <person name="Spieth J."/>
            <person name="Ryan E."/>
            <person name="Andrews S."/>
            <person name="Geisel C."/>
            <person name="Layman D."/>
            <person name="Du H."/>
            <person name="Ali J."/>
            <person name="Berghoff A."/>
            <person name="Jones K."/>
            <person name="Drone K."/>
            <person name="Cotton M."/>
            <person name="Joshu C."/>
            <person name="Antonoiu B."/>
            <person name="Zidanic M."/>
            <person name="Strong C."/>
            <person name="Sun H."/>
            <person name="Lamar B."/>
            <person name="Yordan C."/>
            <person name="Ma P."/>
            <person name="Zhong J."/>
            <person name="Preston R."/>
            <person name="Vil D."/>
            <person name="Shekher M."/>
            <person name="Matero A."/>
            <person name="Shah R."/>
            <person name="Swaby I.K."/>
            <person name="O'Shaughnessy A."/>
            <person name="Rodriguez M."/>
            <person name="Hoffman J."/>
            <person name="Till S."/>
            <person name="Granat S."/>
            <person name="Shohdy N."/>
            <person name="Hasegawa A."/>
            <person name="Hameed A."/>
            <person name="Lodhi M."/>
            <person name="Johnson A."/>
            <person name="Chen E."/>
            <person name="Marra M.A."/>
            <person name="Martienssen R."/>
            <person name="McCombie W.R."/>
        </authorList>
    </citation>
    <scope>NUCLEOTIDE SEQUENCE [LARGE SCALE GENOMIC DNA]</scope>
    <source>
        <strain>cv. Columbia</strain>
    </source>
</reference>
<reference key="2">
    <citation type="journal article" date="2017" name="Plant J.">
        <title>Araport11: a complete reannotation of the Arabidopsis thaliana reference genome.</title>
        <authorList>
            <person name="Cheng C.Y."/>
            <person name="Krishnakumar V."/>
            <person name="Chan A.P."/>
            <person name="Thibaud-Nissen F."/>
            <person name="Schobel S."/>
            <person name="Town C.D."/>
        </authorList>
    </citation>
    <scope>GENOME REANNOTATION</scope>
    <source>
        <strain>cv. Columbia</strain>
    </source>
</reference>
<reference key="3">
    <citation type="submission" date="2002-03" db="EMBL/GenBank/DDBJ databases">
        <title>Full-length cDNA from Arabidopsis thaliana.</title>
        <authorList>
            <person name="Brover V.V."/>
            <person name="Troukhan M.E."/>
            <person name="Alexandrov N.A."/>
            <person name="Lu Y.-P."/>
            <person name="Flavell R.B."/>
            <person name="Feldmann K.A."/>
        </authorList>
    </citation>
    <scope>NUCLEOTIDE SEQUENCE [LARGE SCALE MRNA] OF 8-478</scope>
</reference>
<reference key="4">
    <citation type="journal article" date="2003" name="Science">
        <title>Empirical analysis of transcriptional activity in the Arabidopsis genome.</title>
        <authorList>
            <person name="Yamada K."/>
            <person name="Lim J."/>
            <person name="Dale J.M."/>
            <person name="Chen H."/>
            <person name="Shinn P."/>
            <person name="Palm C.J."/>
            <person name="Southwick A.M."/>
            <person name="Wu H.C."/>
            <person name="Kim C.J."/>
            <person name="Nguyen M."/>
            <person name="Pham P.K."/>
            <person name="Cheuk R.F."/>
            <person name="Karlin-Newmann G."/>
            <person name="Liu S.X."/>
            <person name="Lam B."/>
            <person name="Sakano H."/>
            <person name="Wu T."/>
            <person name="Yu G."/>
            <person name="Miranda M."/>
            <person name="Quach H.L."/>
            <person name="Tripp M."/>
            <person name="Chang C.H."/>
            <person name="Lee J.M."/>
            <person name="Toriumi M.J."/>
            <person name="Chan M.M."/>
            <person name="Tang C.C."/>
            <person name="Onodera C.S."/>
            <person name="Deng J.M."/>
            <person name="Akiyama K."/>
            <person name="Ansari Y."/>
            <person name="Arakawa T."/>
            <person name="Banh J."/>
            <person name="Banno F."/>
            <person name="Bowser L."/>
            <person name="Brooks S.Y."/>
            <person name="Carninci P."/>
            <person name="Chao Q."/>
            <person name="Choy N."/>
            <person name="Enju A."/>
            <person name="Goldsmith A.D."/>
            <person name="Gurjal M."/>
            <person name="Hansen N.F."/>
            <person name="Hayashizaki Y."/>
            <person name="Johnson-Hopson C."/>
            <person name="Hsuan V.W."/>
            <person name="Iida K."/>
            <person name="Karnes M."/>
            <person name="Khan S."/>
            <person name="Koesema E."/>
            <person name="Ishida J."/>
            <person name="Jiang P.X."/>
            <person name="Jones T."/>
            <person name="Kawai J."/>
            <person name="Kamiya A."/>
            <person name="Meyers C."/>
            <person name="Nakajima M."/>
            <person name="Narusaka M."/>
            <person name="Seki M."/>
            <person name="Sakurai T."/>
            <person name="Satou M."/>
            <person name="Tamse R."/>
            <person name="Vaysberg M."/>
            <person name="Wallender E.K."/>
            <person name="Wong C."/>
            <person name="Yamamura Y."/>
            <person name="Yuan S."/>
            <person name="Shinozaki K."/>
            <person name="Davis R.W."/>
            <person name="Theologis A."/>
            <person name="Ecker J.R."/>
        </authorList>
    </citation>
    <scope>NUCLEOTIDE SEQUENCE [LARGE SCALE MRNA] OF 9-478</scope>
    <source>
        <strain>cv. Columbia</strain>
    </source>
</reference>
<reference key="5">
    <citation type="submission" date="2006-07" db="EMBL/GenBank/DDBJ databases">
        <title>Arabidopsis ORF clones.</title>
        <authorList>
            <person name="Kim C.J."/>
            <person name="Chen H."/>
            <person name="Quinitio C."/>
            <person name="Shinn P."/>
            <person name="Ecker J.R."/>
        </authorList>
    </citation>
    <scope>NUCLEOTIDE SEQUENCE [LARGE SCALE MRNA] OF 23-478</scope>
</reference>
<reference key="6">
    <citation type="journal article" date="2004" name="Plant J.">
        <title>Selective expression of a novel high-affinity transport system for acidic and neutral amino acids in the tapetum cells of Arabidopsis flowers.</title>
        <authorList>
            <person name="Lee Y.-H."/>
            <person name="Tegeder M."/>
        </authorList>
    </citation>
    <scope>GENE FAMILY</scope>
    <source>
        <strain>cv. C24</strain>
    </source>
</reference>
<name>LHTL7_ARATH</name>
<proteinExistence type="evidence at transcript level"/>